<dbReference type="EC" id="4.1.1.23" evidence="1"/>
<dbReference type="EMBL" id="CP000089">
    <property type="protein sequence ID" value="AAZ48179.1"/>
    <property type="molecule type" value="Genomic_DNA"/>
</dbReference>
<dbReference type="SMR" id="Q47AF2"/>
<dbReference type="STRING" id="159087.Daro_3450"/>
<dbReference type="KEGG" id="dar:Daro_3450"/>
<dbReference type="eggNOG" id="COG0284">
    <property type="taxonomic scope" value="Bacteria"/>
</dbReference>
<dbReference type="HOGENOM" id="CLU_060704_1_0_4"/>
<dbReference type="OrthoDB" id="9808470at2"/>
<dbReference type="UniPathway" id="UPA00070">
    <property type="reaction ID" value="UER00120"/>
</dbReference>
<dbReference type="GO" id="GO:0004590">
    <property type="term" value="F:orotidine-5'-phosphate decarboxylase activity"/>
    <property type="evidence" value="ECO:0007669"/>
    <property type="project" value="UniProtKB-UniRule"/>
</dbReference>
<dbReference type="GO" id="GO:0006207">
    <property type="term" value="P:'de novo' pyrimidine nucleobase biosynthetic process"/>
    <property type="evidence" value="ECO:0007669"/>
    <property type="project" value="InterPro"/>
</dbReference>
<dbReference type="GO" id="GO:0044205">
    <property type="term" value="P:'de novo' UMP biosynthetic process"/>
    <property type="evidence" value="ECO:0007669"/>
    <property type="project" value="UniProtKB-UniRule"/>
</dbReference>
<dbReference type="CDD" id="cd04725">
    <property type="entry name" value="OMP_decarboxylase_like"/>
    <property type="match status" value="1"/>
</dbReference>
<dbReference type="Gene3D" id="3.20.20.70">
    <property type="entry name" value="Aldolase class I"/>
    <property type="match status" value="1"/>
</dbReference>
<dbReference type="HAMAP" id="MF_01215">
    <property type="entry name" value="OMPdecase_type2"/>
    <property type="match status" value="1"/>
</dbReference>
<dbReference type="InterPro" id="IPR013785">
    <property type="entry name" value="Aldolase_TIM"/>
</dbReference>
<dbReference type="InterPro" id="IPR018089">
    <property type="entry name" value="OMPdecase_AS"/>
</dbReference>
<dbReference type="InterPro" id="IPR011995">
    <property type="entry name" value="OMPdecase_type-2"/>
</dbReference>
<dbReference type="InterPro" id="IPR001754">
    <property type="entry name" value="OMPdeCOase_dom"/>
</dbReference>
<dbReference type="InterPro" id="IPR011060">
    <property type="entry name" value="RibuloseP-bd_barrel"/>
</dbReference>
<dbReference type="NCBIfam" id="TIGR02127">
    <property type="entry name" value="pyrF_sub2"/>
    <property type="match status" value="1"/>
</dbReference>
<dbReference type="PANTHER" id="PTHR43375">
    <property type="entry name" value="OROTIDINE 5'-PHOSPHATE DECARBOXYLASE"/>
    <property type="match status" value="1"/>
</dbReference>
<dbReference type="PANTHER" id="PTHR43375:SF1">
    <property type="entry name" value="OROTIDINE 5'-PHOSPHATE DECARBOXYLASE"/>
    <property type="match status" value="1"/>
</dbReference>
<dbReference type="Pfam" id="PF00215">
    <property type="entry name" value="OMPdecase"/>
    <property type="match status" value="1"/>
</dbReference>
<dbReference type="SMART" id="SM00934">
    <property type="entry name" value="OMPdecase"/>
    <property type="match status" value="1"/>
</dbReference>
<dbReference type="SUPFAM" id="SSF51366">
    <property type="entry name" value="Ribulose-phoshate binding barrel"/>
    <property type="match status" value="1"/>
</dbReference>
<dbReference type="PROSITE" id="PS00156">
    <property type="entry name" value="OMPDECASE"/>
    <property type="match status" value="1"/>
</dbReference>
<feature type="chain" id="PRO_1000066469" description="Orotidine 5'-phosphate decarboxylase">
    <location>
        <begin position="1"/>
        <end position="270"/>
    </location>
</feature>
<feature type="active site" description="Proton donor" evidence="1">
    <location>
        <position position="95"/>
    </location>
</feature>
<accession>Q47AF2</accession>
<proteinExistence type="inferred from homology"/>
<gene>
    <name evidence="1" type="primary">pyrF</name>
    <name type="ordered locus">Daro_3450</name>
</gene>
<evidence type="ECO:0000255" key="1">
    <source>
        <dbReference type="HAMAP-Rule" id="MF_01215"/>
    </source>
</evidence>
<comment type="catalytic activity">
    <reaction evidence="1">
        <text>orotidine 5'-phosphate + H(+) = UMP + CO2</text>
        <dbReference type="Rhea" id="RHEA:11596"/>
        <dbReference type="ChEBI" id="CHEBI:15378"/>
        <dbReference type="ChEBI" id="CHEBI:16526"/>
        <dbReference type="ChEBI" id="CHEBI:57538"/>
        <dbReference type="ChEBI" id="CHEBI:57865"/>
        <dbReference type="EC" id="4.1.1.23"/>
    </reaction>
</comment>
<comment type="pathway">
    <text evidence="1">Pyrimidine metabolism; UMP biosynthesis via de novo pathway; UMP from orotate: step 2/2.</text>
</comment>
<comment type="similarity">
    <text evidence="1">Belongs to the OMP decarboxylase family. Type 2 subfamily.</text>
</comment>
<sequence>MTFIDQLNAAWQKNNSLLCVGLDPDPAKFPAHLKGRDDKIFEFCAAIVDATADLVCSFKPQIAYFAARRAEDQLEALIAHIHEKHPGIPVILDAKRGDIGSTAEQYAVEAFERFKADAVTVNPYMGRDSVDPYLAYPDKGVILLCRTSNPGGSDLQFLDVGGEKLYERVARLASGEWNSSGQISLVVGATFPAEIARVREIVGDVPLLVPGIGAQGGDIEATVRAGRTANGTGLMINSSRAILYAGKDERFAAAARQVALETRDAINLYR</sequence>
<keyword id="KW-0210">Decarboxylase</keyword>
<keyword id="KW-0456">Lyase</keyword>
<keyword id="KW-0665">Pyrimidine biosynthesis</keyword>
<organism>
    <name type="scientific">Dechloromonas aromatica (strain RCB)</name>
    <dbReference type="NCBI Taxonomy" id="159087"/>
    <lineage>
        <taxon>Bacteria</taxon>
        <taxon>Pseudomonadati</taxon>
        <taxon>Pseudomonadota</taxon>
        <taxon>Betaproteobacteria</taxon>
        <taxon>Rhodocyclales</taxon>
        <taxon>Azonexaceae</taxon>
        <taxon>Dechloromonas</taxon>
    </lineage>
</organism>
<protein>
    <recommendedName>
        <fullName evidence="1">Orotidine 5'-phosphate decarboxylase</fullName>
        <ecNumber evidence="1">4.1.1.23</ecNumber>
    </recommendedName>
    <alternativeName>
        <fullName evidence="1">OMP decarboxylase</fullName>
        <shortName evidence="1">OMPDCase</shortName>
        <shortName evidence="1">OMPdecase</shortName>
    </alternativeName>
</protein>
<reference key="1">
    <citation type="journal article" date="2009" name="BMC Genomics">
        <title>Metabolic analysis of the soil microbe Dechloromonas aromatica str. RCB: indications of a surprisingly complex life-style and cryptic anaerobic pathways for aromatic degradation.</title>
        <authorList>
            <person name="Salinero K.K."/>
            <person name="Keller K."/>
            <person name="Feil W.S."/>
            <person name="Feil H."/>
            <person name="Trong S."/>
            <person name="Di Bartolo G."/>
            <person name="Lapidus A."/>
        </authorList>
    </citation>
    <scope>NUCLEOTIDE SEQUENCE [LARGE SCALE GENOMIC DNA]</scope>
    <source>
        <strain>RCB</strain>
    </source>
</reference>
<name>PYRF_DECAR</name>